<reference key="1">
    <citation type="journal article" date="2003" name="J. Bacteriol.">
        <title>Complete genome sequence of the ammonia-oxidizing bacterium and obligate chemolithoautotroph Nitrosomonas europaea.</title>
        <authorList>
            <person name="Chain P."/>
            <person name="Lamerdin J.E."/>
            <person name="Larimer F.W."/>
            <person name="Regala W."/>
            <person name="Lao V."/>
            <person name="Land M.L."/>
            <person name="Hauser L."/>
            <person name="Hooper A.B."/>
            <person name="Klotz M.G."/>
            <person name="Norton J."/>
            <person name="Sayavedra-Soto L.A."/>
            <person name="Arciero D.M."/>
            <person name="Hommes N.G."/>
            <person name="Whittaker M.M."/>
            <person name="Arp D.J."/>
        </authorList>
    </citation>
    <scope>NUCLEOTIDE SEQUENCE [LARGE SCALE GENOMIC DNA]</scope>
    <source>
        <strain>ATCC 19718 / CIP 103999 / KCTC 2705 / NBRC 14298</strain>
    </source>
</reference>
<gene>
    <name evidence="1" type="primary">dsbB</name>
    <name type="ordered locus">NE1175</name>
</gene>
<accession>Q82VB9</accession>
<proteinExistence type="inferred from homology"/>
<protein>
    <recommendedName>
        <fullName evidence="1">Disulfide bond formation protein B</fullName>
    </recommendedName>
    <alternativeName>
        <fullName evidence="1">Disulfide oxidoreductase</fullName>
    </alternativeName>
</protein>
<evidence type="ECO:0000255" key="1">
    <source>
        <dbReference type="HAMAP-Rule" id="MF_00286"/>
    </source>
</evidence>
<name>DSBB_NITEU</name>
<dbReference type="EMBL" id="AL954747">
    <property type="protein sequence ID" value="CAD85086.1"/>
    <property type="molecule type" value="Genomic_DNA"/>
</dbReference>
<dbReference type="RefSeq" id="WP_011111766.1">
    <property type="nucleotide sequence ID" value="NC_004757.1"/>
</dbReference>
<dbReference type="SMR" id="Q82VB9"/>
<dbReference type="STRING" id="228410.NE1175"/>
<dbReference type="GeneID" id="87104355"/>
<dbReference type="KEGG" id="neu:NE1175"/>
<dbReference type="eggNOG" id="COG1495">
    <property type="taxonomic scope" value="Bacteria"/>
</dbReference>
<dbReference type="HOGENOM" id="CLU_098660_1_0_4"/>
<dbReference type="OrthoDB" id="3711263at2"/>
<dbReference type="PhylomeDB" id="Q82VB9"/>
<dbReference type="Proteomes" id="UP000001416">
    <property type="component" value="Chromosome"/>
</dbReference>
<dbReference type="GO" id="GO:0005886">
    <property type="term" value="C:plasma membrane"/>
    <property type="evidence" value="ECO:0007669"/>
    <property type="project" value="UniProtKB-SubCell"/>
</dbReference>
<dbReference type="GO" id="GO:0009055">
    <property type="term" value="F:electron transfer activity"/>
    <property type="evidence" value="ECO:0007669"/>
    <property type="project" value="UniProtKB-UniRule"/>
</dbReference>
<dbReference type="GO" id="GO:0015035">
    <property type="term" value="F:protein-disulfide reductase activity"/>
    <property type="evidence" value="ECO:0007669"/>
    <property type="project" value="UniProtKB-UniRule"/>
</dbReference>
<dbReference type="GO" id="GO:0006457">
    <property type="term" value="P:protein folding"/>
    <property type="evidence" value="ECO:0007669"/>
    <property type="project" value="InterPro"/>
</dbReference>
<dbReference type="Gene3D" id="1.20.1550.10">
    <property type="entry name" value="DsbB-like"/>
    <property type="match status" value="1"/>
</dbReference>
<dbReference type="HAMAP" id="MF_00286">
    <property type="entry name" value="DsbB"/>
    <property type="match status" value="1"/>
</dbReference>
<dbReference type="InterPro" id="IPR003752">
    <property type="entry name" value="DiS_bond_form_DsbB/BdbC"/>
</dbReference>
<dbReference type="InterPro" id="IPR022920">
    <property type="entry name" value="Disulphide_bond_form_DsbB"/>
</dbReference>
<dbReference type="InterPro" id="IPR050183">
    <property type="entry name" value="DsbB"/>
</dbReference>
<dbReference type="InterPro" id="IPR023380">
    <property type="entry name" value="DsbB-like_sf"/>
</dbReference>
<dbReference type="PANTHER" id="PTHR36570">
    <property type="entry name" value="DISULFIDE BOND FORMATION PROTEIN B"/>
    <property type="match status" value="1"/>
</dbReference>
<dbReference type="PANTHER" id="PTHR36570:SF3">
    <property type="entry name" value="DISULFIDE BOND FORMATION PROTEIN B"/>
    <property type="match status" value="1"/>
</dbReference>
<dbReference type="Pfam" id="PF02600">
    <property type="entry name" value="DsbB"/>
    <property type="match status" value="1"/>
</dbReference>
<dbReference type="SUPFAM" id="SSF158442">
    <property type="entry name" value="DsbB-like"/>
    <property type="match status" value="1"/>
</dbReference>
<organism>
    <name type="scientific">Nitrosomonas europaea (strain ATCC 19718 / CIP 103999 / KCTC 2705 / NBRC 14298)</name>
    <dbReference type="NCBI Taxonomy" id="228410"/>
    <lineage>
        <taxon>Bacteria</taxon>
        <taxon>Pseudomonadati</taxon>
        <taxon>Pseudomonadota</taxon>
        <taxon>Betaproteobacteria</taxon>
        <taxon>Nitrosomonadales</taxon>
        <taxon>Nitrosomonadaceae</taxon>
        <taxon>Nitrosomonas</taxon>
    </lineage>
</organism>
<feature type="chain" id="PRO_0000298374" description="Disulfide bond formation protein B">
    <location>
        <begin position="1"/>
        <end position="164"/>
    </location>
</feature>
<feature type="topological domain" description="Cytoplasmic" evidence="1">
    <location>
        <begin position="1"/>
        <end position="4"/>
    </location>
</feature>
<feature type="transmembrane region" description="Helical" evidence="1">
    <location>
        <begin position="5"/>
        <end position="21"/>
    </location>
</feature>
<feature type="topological domain" description="Periplasmic" evidence="1">
    <location>
        <begin position="22"/>
        <end position="39"/>
    </location>
</feature>
<feature type="transmembrane region" description="Helical" evidence="1">
    <location>
        <begin position="40"/>
        <end position="56"/>
    </location>
</feature>
<feature type="topological domain" description="Cytoplasmic" evidence="1">
    <location>
        <begin position="57"/>
        <end position="62"/>
    </location>
</feature>
<feature type="transmembrane region" description="Helical" evidence="1">
    <location>
        <begin position="63"/>
        <end position="80"/>
    </location>
</feature>
<feature type="topological domain" description="Periplasmic" evidence="1">
    <location>
        <begin position="81"/>
        <end position="136"/>
    </location>
</feature>
<feature type="transmembrane region" description="Helical" evidence="1">
    <location>
        <begin position="137"/>
        <end position="155"/>
    </location>
</feature>
<feature type="topological domain" description="Cytoplasmic" evidence="1">
    <location>
        <begin position="156"/>
        <end position="164"/>
    </location>
</feature>
<feature type="disulfide bond" description="Redox-active" evidence="1">
    <location>
        <begin position="31"/>
        <end position="34"/>
    </location>
</feature>
<feature type="disulfide bond" description="Redox-active" evidence="1">
    <location>
        <begin position="94"/>
        <end position="122"/>
    </location>
</feature>
<sequence>MRIIFLLIALICAGLVSYALYLQLADGLLPCPLCIFQRMAYWLVGITALFAFIHHPQRLGRRIYCGLIILFSLAGAIVAGRQAWLVRFPEAFECGISPEEAFLNELPLARWWPDMFEANGDCTDGTWQFLSLTIPDWSLLIFLAFSLIAGLLWRSRSISSSNLK</sequence>
<keyword id="KW-0997">Cell inner membrane</keyword>
<keyword id="KW-1003">Cell membrane</keyword>
<keyword id="KW-0143">Chaperone</keyword>
<keyword id="KW-1015">Disulfide bond</keyword>
<keyword id="KW-0249">Electron transport</keyword>
<keyword id="KW-0472">Membrane</keyword>
<keyword id="KW-0560">Oxidoreductase</keyword>
<keyword id="KW-0676">Redox-active center</keyword>
<keyword id="KW-1185">Reference proteome</keyword>
<keyword id="KW-0812">Transmembrane</keyword>
<keyword id="KW-1133">Transmembrane helix</keyword>
<keyword id="KW-0813">Transport</keyword>
<comment type="function">
    <text evidence="1">Required for disulfide bond formation in some periplasmic proteins. Acts by oxidizing the DsbA protein.</text>
</comment>
<comment type="subcellular location">
    <subcellularLocation>
        <location evidence="1">Cell inner membrane</location>
        <topology evidence="1">Multi-pass membrane protein</topology>
    </subcellularLocation>
</comment>
<comment type="similarity">
    <text evidence="1">Belongs to the DsbB family.</text>
</comment>